<keyword id="KW-1185">Reference proteome</keyword>
<keyword id="KW-0687">Ribonucleoprotein</keyword>
<keyword id="KW-0689">Ribosomal protein</keyword>
<keyword id="KW-0694">RNA-binding</keyword>
<keyword id="KW-0699">rRNA-binding</keyword>
<comment type="function">
    <text evidence="1">One of the primary rRNA binding proteins, it binds directly to 16S rRNA central domain where it helps coordinate assembly of the platform of the 30S subunit.</text>
</comment>
<comment type="subunit">
    <text evidence="1">Part of the 30S ribosomal subunit. Contacts proteins S5 and S12.</text>
</comment>
<comment type="similarity">
    <text evidence="1">Belongs to the universal ribosomal protein uS8 family.</text>
</comment>
<protein>
    <recommendedName>
        <fullName evidence="1">Small ribosomal subunit protein uS8</fullName>
    </recommendedName>
    <alternativeName>
        <fullName evidence="2">30S ribosomal protein S8</fullName>
    </alternativeName>
</protein>
<dbReference type="EMBL" id="BA000030">
    <property type="protein sequence ID" value="BAC72652.1"/>
    <property type="molecule type" value="Genomic_DNA"/>
</dbReference>
<dbReference type="RefSeq" id="WP_010986352.1">
    <property type="nucleotide sequence ID" value="NZ_JZJK01000077.1"/>
</dbReference>
<dbReference type="SMR" id="Q82DN2"/>
<dbReference type="GeneID" id="94000207"/>
<dbReference type="KEGG" id="sma:SAVERM_4940"/>
<dbReference type="eggNOG" id="COG0096">
    <property type="taxonomic scope" value="Bacteria"/>
</dbReference>
<dbReference type="HOGENOM" id="CLU_098428_0_1_11"/>
<dbReference type="OrthoDB" id="9802617at2"/>
<dbReference type="Proteomes" id="UP000000428">
    <property type="component" value="Chromosome"/>
</dbReference>
<dbReference type="GO" id="GO:1990904">
    <property type="term" value="C:ribonucleoprotein complex"/>
    <property type="evidence" value="ECO:0007669"/>
    <property type="project" value="UniProtKB-KW"/>
</dbReference>
<dbReference type="GO" id="GO:0005840">
    <property type="term" value="C:ribosome"/>
    <property type="evidence" value="ECO:0007669"/>
    <property type="project" value="UniProtKB-KW"/>
</dbReference>
<dbReference type="GO" id="GO:0019843">
    <property type="term" value="F:rRNA binding"/>
    <property type="evidence" value="ECO:0007669"/>
    <property type="project" value="UniProtKB-UniRule"/>
</dbReference>
<dbReference type="GO" id="GO:0003735">
    <property type="term" value="F:structural constituent of ribosome"/>
    <property type="evidence" value="ECO:0007669"/>
    <property type="project" value="InterPro"/>
</dbReference>
<dbReference type="GO" id="GO:0006412">
    <property type="term" value="P:translation"/>
    <property type="evidence" value="ECO:0007669"/>
    <property type="project" value="UniProtKB-UniRule"/>
</dbReference>
<dbReference type="FunFam" id="3.30.1370.30:FF:000002">
    <property type="entry name" value="30S ribosomal protein S8"/>
    <property type="match status" value="1"/>
</dbReference>
<dbReference type="FunFam" id="3.30.1490.10:FF:000001">
    <property type="entry name" value="30S ribosomal protein S8"/>
    <property type="match status" value="1"/>
</dbReference>
<dbReference type="Gene3D" id="3.30.1370.30">
    <property type="match status" value="1"/>
</dbReference>
<dbReference type="Gene3D" id="3.30.1490.10">
    <property type="match status" value="1"/>
</dbReference>
<dbReference type="HAMAP" id="MF_01302_B">
    <property type="entry name" value="Ribosomal_uS8_B"/>
    <property type="match status" value="1"/>
</dbReference>
<dbReference type="InterPro" id="IPR000630">
    <property type="entry name" value="Ribosomal_uS8"/>
</dbReference>
<dbReference type="InterPro" id="IPR035987">
    <property type="entry name" value="Ribosomal_uS8_sf"/>
</dbReference>
<dbReference type="NCBIfam" id="NF001109">
    <property type="entry name" value="PRK00136.1"/>
    <property type="match status" value="1"/>
</dbReference>
<dbReference type="PANTHER" id="PTHR11758">
    <property type="entry name" value="40S RIBOSOMAL PROTEIN S15A"/>
    <property type="match status" value="1"/>
</dbReference>
<dbReference type="Pfam" id="PF00410">
    <property type="entry name" value="Ribosomal_S8"/>
    <property type="match status" value="1"/>
</dbReference>
<dbReference type="SUPFAM" id="SSF56047">
    <property type="entry name" value="Ribosomal protein S8"/>
    <property type="match status" value="1"/>
</dbReference>
<name>RS8_STRAW</name>
<proteinExistence type="inferred from homology"/>
<gene>
    <name evidence="1" type="primary">rpsH</name>
    <name type="ordered locus">SAV_4940</name>
</gene>
<accession>Q82DN2</accession>
<sequence length="132" mass="14309">MTMTDPIADMLTRLRNANSAYHDTVGMPHSKIKSHIAEILQQEGFITGWKVEDAEVGKNLVLELKFGPNRERSIAGIKRISKPGLRVYAKSTNLPKVLGGLGVAIISTSHGLLTDKQAGKKGVGGEVLAYVW</sequence>
<evidence type="ECO:0000255" key="1">
    <source>
        <dbReference type="HAMAP-Rule" id="MF_01302"/>
    </source>
</evidence>
<evidence type="ECO:0000305" key="2"/>
<reference key="1">
    <citation type="journal article" date="2001" name="Proc. Natl. Acad. Sci. U.S.A.">
        <title>Genome sequence of an industrial microorganism Streptomyces avermitilis: deducing the ability of producing secondary metabolites.</title>
        <authorList>
            <person name="Omura S."/>
            <person name="Ikeda H."/>
            <person name="Ishikawa J."/>
            <person name="Hanamoto A."/>
            <person name="Takahashi C."/>
            <person name="Shinose M."/>
            <person name="Takahashi Y."/>
            <person name="Horikawa H."/>
            <person name="Nakazawa H."/>
            <person name="Osonoe T."/>
            <person name="Kikuchi H."/>
            <person name="Shiba T."/>
            <person name="Sakaki Y."/>
            <person name="Hattori M."/>
        </authorList>
    </citation>
    <scope>NUCLEOTIDE SEQUENCE [LARGE SCALE GENOMIC DNA]</scope>
    <source>
        <strain>ATCC 31267 / DSM 46492 / JCM 5070 / NBRC 14893 / NCIMB 12804 / NRRL 8165 / MA-4680</strain>
    </source>
</reference>
<reference key="2">
    <citation type="journal article" date="2003" name="Nat. Biotechnol.">
        <title>Complete genome sequence and comparative analysis of the industrial microorganism Streptomyces avermitilis.</title>
        <authorList>
            <person name="Ikeda H."/>
            <person name="Ishikawa J."/>
            <person name="Hanamoto A."/>
            <person name="Shinose M."/>
            <person name="Kikuchi H."/>
            <person name="Shiba T."/>
            <person name="Sakaki Y."/>
            <person name="Hattori M."/>
            <person name="Omura S."/>
        </authorList>
    </citation>
    <scope>NUCLEOTIDE SEQUENCE [LARGE SCALE GENOMIC DNA]</scope>
    <source>
        <strain>ATCC 31267 / DSM 46492 / JCM 5070 / NBRC 14893 / NCIMB 12804 / NRRL 8165 / MA-4680</strain>
    </source>
</reference>
<feature type="chain" id="PRO_0000126493" description="Small ribosomal subunit protein uS8">
    <location>
        <begin position="1"/>
        <end position="132"/>
    </location>
</feature>
<organism>
    <name type="scientific">Streptomyces avermitilis (strain ATCC 31267 / DSM 46492 / JCM 5070 / NBRC 14893 / NCIMB 12804 / NRRL 8165 / MA-4680)</name>
    <dbReference type="NCBI Taxonomy" id="227882"/>
    <lineage>
        <taxon>Bacteria</taxon>
        <taxon>Bacillati</taxon>
        <taxon>Actinomycetota</taxon>
        <taxon>Actinomycetes</taxon>
        <taxon>Kitasatosporales</taxon>
        <taxon>Streptomycetaceae</taxon>
        <taxon>Streptomyces</taxon>
    </lineage>
</organism>